<sequence length="92" mass="9852">MNKTELIAKVAEKQGVSKKEGAPSVEKVFDTISEALKSGEKVSIPGFGTFEVRERAARKGRNPQTGEEIDIPATKAPAFKPAKALKDAVKAK</sequence>
<organism>
    <name type="scientific">Bacillus phage SPbeta</name>
    <name type="common">Bacillus phage SPBc2</name>
    <name type="synonym">Bacteriophage SP-beta</name>
    <dbReference type="NCBI Taxonomy" id="2932878"/>
    <lineage>
        <taxon>Viruses</taxon>
        <taxon>Duplodnaviria</taxon>
        <taxon>Heunggongvirae</taxon>
        <taxon>Uroviricota</taxon>
        <taxon>Caudoviricetes</taxon>
        <taxon>Spbetavirus</taxon>
        <taxon>Spbetavirus SPbeta</taxon>
    </lineage>
</organism>
<protein>
    <recommendedName>
        <fullName>DNA-binding protein HU 2</fullName>
    </recommendedName>
</protein>
<organismHost>
    <name type="scientific">Bacillus pumilus</name>
    <name type="common">Bacillus mesentericus</name>
    <dbReference type="NCBI Taxonomy" id="1408"/>
</organismHost>
<organismHost>
    <name type="scientific">Bacillus subtilis</name>
    <dbReference type="NCBI Taxonomy" id="1423"/>
</organismHost>
<evidence type="ECO:0000250" key="1"/>
<evidence type="ECO:0000256" key="2">
    <source>
        <dbReference type="SAM" id="MobiDB-lite"/>
    </source>
</evidence>
<evidence type="ECO:0000305" key="3"/>
<gene>
    <name type="primary">hup2</name>
    <name type="ordered locus">SPBc2p063</name>
</gene>
<feature type="chain" id="PRO_0000104915" description="DNA-binding protein HU 2">
    <location>
        <begin position="1"/>
        <end position="92"/>
    </location>
</feature>
<feature type="region of interest" description="Disordered" evidence="2">
    <location>
        <begin position="55"/>
        <end position="77"/>
    </location>
</feature>
<proteinExistence type="inferred from homology"/>
<name>DBH2_BPSPB</name>
<accession>P68574</accession>
<accession>O31946</accession>
<accession>O64075</accession>
<keyword id="KW-0226">DNA condensation</keyword>
<keyword id="KW-0238">DNA-binding</keyword>
<keyword id="KW-1185">Reference proteome</keyword>
<dbReference type="EMBL" id="AF020713">
    <property type="protein sequence ID" value="AAC13035.1"/>
    <property type="molecule type" value="Genomic_DNA"/>
</dbReference>
<dbReference type="PIR" id="T12826">
    <property type="entry name" value="T12826"/>
</dbReference>
<dbReference type="SMR" id="P68574"/>
<dbReference type="KEGG" id="vg:1261351"/>
<dbReference type="Proteomes" id="UP000009091">
    <property type="component" value="Genome"/>
</dbReference>
<dbReference type="GO" id="GO:0003677">
    <property type="term" value="F:DNA binding"/>
    <property type="evidence" value="ECO:0007669"/>
    <property type="project" value="UniProtKB-KW"/>
</dbReference>
<dbReference type="GO" id="GO:0030527">
    <property type="term" value="F:structural constituent of chromatin"/>
    <property type="evidence" value="ECO:0007669"/>
    <property type="project" value="InterPro"/>
</dbReference>
<dbReference type="GO" id="GO:0030261">
    <property type="term" value="P:chromosome condensation"/>
    <property type="evidence" value="ECO:0007669"/>
    <property type="project" value="UniProtKB-KW"/>
</dbReference>
<dbReference type="CDD" id="cd13831">
    <property type="entry name" value="HU"/>
    <property type="match status" value="1"/>
</dbReference>
<dbReference type="FunFam" id="4.10.520.10:FF:000001">
    <property type="entry name" value="DNA-binding protein HU"/>
    <property type="match status" value="1"/>
</dbReference>
<dbReference type="Gene3D" id="4.10.520.10">
    <property type="entry name" value="IHF-like DNA-binding proteins"/>
    <property type="match status" value="1"/>
</dbReference>
<dbReference type="InterPro" id="IPR000119">
    <property type="entry name" value="Hist_DNA-bd"/>
</dbReference>
<dbReference type="InterPro" id="IPR020816">
    <property type="entry name" value="Histone-like_DNA-bd_CS"/>
</dbReference>
<dbReference type="InterPro" id="IPR010992">
    <property type="entry name" value="IHF-like_DNA-bd_dom_sf"/>
</dbReference>
<dbReference type="PANTHER" id="PTHR33175">
    <property type="entry name" value="DNA-BINDING PROTEIN HU"/>
    <property type="match status" value="1"/>
</dbReference>
<dbReference type="PANTHER" id="PTHR33175:SF3">
    <property type="entry name" value="DNA-BINDING PROTEIN HU-BETA"/>
    <property type="match status" value="1"/>
</dbReference>
<dbReference type="Pfam" id="PF00216">
    <property type="entry name" value="Bac_DNA_binding"/>
    <property type="match status" value="1"/>
</dbReference>
<dbReference type="PRINTS" id="PR01727">
    <property type="entry name" value="DNABINDINGHU"/>
</dbReference>
<dbReference type="SMART" id="SM00411">
    <property type="entry name" value="BHL"/>
    <property type="match status" value="1"/>
</dbReference>
<dbReference type="SUPFAM" id="SSF47729">
    <property type="entry name" value="IHF-like DNA-binding proteins"/>
    <property type="match status" value="1"/>
</dbReference>
<dbReference type="PROSITE" id="PS00045">
    <property type="entry name" value="HISTONE_LIKE"/>
    <property type="match status" value="1"/>
</dbReference>
<comment type="function">
    <text evidence="1">Histone-like DNA-binding protein which is capable of wrapping DNA to stabilize it, and thus to prevent its denaturation under extreme environmental conditions.</text>
</comment>
<comment type="subunit">
    <text evidence="1">Homodimer.</text>
</comment>
<comment type="similarity">
    <text evidence="3">Belongs to the bacterial histone-like protein family.</text>
</comment>
<reference key="1">
    <citation type="journal article" date="1999" name="Microbiology">
        <title>Nucleotide sequence of the Bacillus subtilis temperate bacteriophage SPbetac2.</title>
        <authorList>
            <person name="Lazarevic V."/>
            <person name="Duesterhoeft A."/>
            <person name="Soldo B."/>
            <person name="Hilbert H."/>
            <person name="Mauel C."/>
            <person name="Karamata D."/>
        </authorList>
    </citation>
    <scope>NUCLEOTIDE SEQUENCE [LARGE SCALE GENOMIC DNA]</scope>
</reference>